<evidence type="ECO:0000250" key="1"/>
<evidence type="ECO:0000255" key="2">
    <source>
        <dbReference type="PROSITE-ProRule" id="PRU01210"/>
    </source>
</evidence>
<evidence type="ECO:0000305" key="3"/>
<dbReference type="SMR" id="P0C299"/>
<dbReference type="GO" id="GO:0005576">
    <property type="term" value="C:extracellular region"/>
    <property type="evidence" value="ECO:0007669"/>
    <property type="project" value="UniProtKB-SubCell"/>
</dbReference>
<dbReference type="GO" id="GO:0019871">
    <property type="term" value="F:sodium channel inhibitor activity"/>
    <property type="evidence" value="ECO:0007669"/>
    <property type="project" value="InterPro"/>
</dbReference>
<dbReference type="GO" id="GO:0090729">
    <property type="term" value="F:toxin activity"/>
    <property type="evidence" value="ECO:0007669"/>
    <property type="project" value="UniProtKB-KW"/>
</dbReference>
<dbReference type="CDD" id="cd23106">
    <property type="entry name" value="neurotoxins_LC_scorpion"/>
    <property type="match status" value="1"/>
</dbReference>
<dbReference type="Gene3D" id="3.30.30.10">
    <property type="entry name" value="Knottin, scorpion toxin-like"/>
    <property type="match status" value="1"/>
</dbReference>
<dbReference type="InterPro" id="IPR044062">
    <property type="entry name" value="LCN-type_CS_alpha_beta_dom"/>
</dbReference>
<dbReference type="InterPro" id="IPR036574">
    <property type="entry name" value="Scorpion_toxin-like_sf"/>
</dbReference>
<dbReference type="InterPro" id="IPR002061">
    <property type="entry name" value="Scorpion_toxinL/defensin"/>
</dbReference>
<dbReference type="Pfam" id="PF00537">
    <property type="entry name" value="Toxin_3"/>
    <property type="match status" value="1"/>
</dbReference>
<dbReference type="SUPFAM" id="SSF57095">
    <property type="entry name" value="Scorpion toxin-like"/>
    <property type="match status" value="1"/>
</dbReference>
<dbReference type="PROSITE" id="PS51863">
    <property type="entry name" value="LCN_CSAB"/>
    <property type="match status" value="1"/>
</dbReference>
<organism>
    <name type="scientific">Androctonus crassicauda</name>
    <name type="common">Arabian fat-tailed scorpion</name>
    <dbReference type="NCBI Taxonomy" id="122909"/>
    <lineage>
        <taxon>Eukaryota</taxon>
        <taxon>Metazoa</taxon>
        <taxon>Ecdysozoa</taxon>
        <taxon>Arthropoda</taxon>
        <taxon>Chelicerata</taxon>
        <taxon>Arachnida</taxon>
        <taxon>Scorpiones</taxon>
        <taxon>Buthida</taxon>
        <taxon>Buthoidea</taxon>
        <taxon>Buthidae</taxon>
        <taxon>Androctonus</taxon>
    </lineage>
</organism>
<keyword id="KW-1015">Disulfide bond</keyword>
<keyword id="KW-0872">Ion channel impairing toxin</keyword>
<keyword id="KW-0528">Neurotoxin</keyword>
<keyword id="KW-0964">Secreted</keyword>
<keyword id="KW-0800">Toxin</keyword>
<keyword id="KW-0738">Voltage-gated sodium channel impairing toxin</keyword>
<feature type="chain" id="PRO_0000271326" description="Toxin Acra III-2">
    <location>
        <begin position="1"/>
        <end position="76"/>
    </location>
</feature>
<feature type="domain" description="LCN-type CS-alpha/beta" evidence="2">
    <location>
        <begin position="3"/>
        <end position="67"/>
    </location>
</feature>
<feature type="disulfide bond" evidence="2">
    <location>
        <begin position="18"/>
        <end position="41"/>
    </location>
</feature>
<feature type="disulfide bond" evidence="2">
    <location>
        <begin position="27"/>
        <end position="46"/>
    </location>
</feature>
<feature type="disulfide bond" evidence="2">
    <location>
        <begin position="31"/>
        <end position="48"/>
    </location>
</feature>
<name>TX32_ANDCR</name>
<protein>
    <recommendedName>
        <fullName>Toxin Acra III-2</fullName>
    </recommendedName>
</protein>
<proteinExistence type="evidence at transcript level"/>
<comment type="function">
    <text evidence="1">Binds to sodium channels (Nav) and affects the channel activation process.</text>
</comment>
<comment type="subcellular location">
    <subcellularLocation>
        <location evidence="1">Secreted</location>
    </subcellularLocation>
</comment>
<comment type="tissue specificity">
    <text>Expressed by the venom gland.</text>
</comment>
<comment type="domain">
    <text evidence="3">Has the structural arrangement of an alpha-helix connected to antiparallel beta-sheets by disulfide bonds (CS-alpha/beta).</text>
</comment>
<comment type="similarity">
    <text evidence="3">Belongs to the long (3 C-C) scorpion toxin superfamily. Sodium channel inhibitor family. Beta subfamily.</text>
</comment>
<reference key="1">
    <citation type="journal article" date="2006" name="Toxicon">
        <title>Characterization of venom components from the scorpion Androctonus crassicauda of Turkey: peptides and genes.</title>
        <authorList>
            <person name="Caliskan F."/>
            <person name="Garcia B.I."/>
            <person name="Coronas F.I.V."/>
            <person name="Batista C.V.F."/>
            <person name="Zamudio F.Z."/>
            <person name="Possani L.D."/>
        </authorList>
    </citation>
    <scope>NUCLEOTIDE SEQUENCE [MRNA]</scope>
    <source>
        <tissue>Venom gland</tissue>
    </source>
</reference>
<sequence length="76" mass="8782">ADVPGNYPLNTYGNMYYCTILGENEFCKKICKVHGVSYGYCYNSYCWCEYLEGKDINIWDAVKNHCTNTNLYPNGK</sequence>
<accession>P0C299</accession>